<protein>
    <recommendedName>
        <fullName>Putative antiporter subunit mnhD2</fullName>
    </recommendedName>
    <alternativeName>
        <fullName>Mrp complex subunit D2</fullName>
    </alternativeName>
    <alternativeName>
        <fullName>Putative NADH-ubiquinone oxidoreductase subunit mnhD2</fullName>
    </alternativeName>
</protein>
<accession>Q5HI42</accession>
<keyword id="KW-0050">Antiport</keyword>
<keyword id="KW-1003">Cell membrane</keyword>
<keyword id="KW-0406">Ion transport</keyword>
<keyword id="KW-0472">Membrane</keyword>
<keyword id="KW-0812">Transmembrane</keyword>
<keyword id="KW-1133">Transmembrane helix</keyword>
<keyword id="KW-0813">Transport</keyword>
<evidence type="ECO:0000250" key="1"/>
<evidence type="ECO:0000255" key="2"/>
<evidence type="ECO:0000305" key="3"/>
<feature type="chain" id="PRO_0000372230" description="Putative antiporter subunit mnhD2">
    <location>
        <begin position="1"/>
        <end position="498"/>
    </location>
</feature>
<feature type="transmembrane region" description="Helical" evidence="2">
    <location>
        <begin position="2"/>
        <end position="22"/>
    </location>
</feature>
<feature type="transmembrane region" description="Helical" evidence="2">
    <location>
        <begin position="32"/>
        <end position="52"/>
    </location>
</feature>
<feature type="transmembrane region" description="Helical" evidence="2">
    <location>
        <begin position="78"/>
        <end position="98"/>
    </location>
</feature>
<feature type="transmembrane region" description="Helical" evidence="2">
    <location>
        <begin position="108"/>
        <end position="128"/>
    </location>
</feature>
<feature type="transmembrane region" description="Helical" evidence="2">
    <location>
        <begin position="130"/>
        <end position="150"/>
    </location>
</feature>
<feature type="transmembrane region" description="Helical" evidence="2">
    <location>
        <begin position="161"/>
        <end position="181"/>
    </location>
</feature>
<feature type="transmembrane region" description="Helical" evidence="2">
    <location>
        <begin position="209"/>
        <end position="229"/>
    </location>
</feature>
<feature type="transmembrane region" description="Helical" evidence="2">
    <location>
        <begin position="240"/>
        <end position="260"/>
    </location>
</feature>
<feature type="transmembrane region" description="Helical" evidence="2">
    <location>
        <begin position="271"/>
        <end position="291"/>
    </location>
</feature>
<feature type="transmembrane region" description="Helical" evidence="2">
    <location>
        <begin position="308"/>
        <end position="328"/>
    </location>
</feature>
<feature type="transmembrane region" description="Helical" evidence="2">
    <location>
        <begin position="330"/>
        <end position="350"/>
    </location>
</feature>
<feature type="transmembrane region" description="Helical" evidence="2">
    <location>
        <begin position="369"/>
        <end position="389"/>
    </location>
</feature>
<feature type="transmembrane region" description="Helical" evidence="2">
    <location>
        <begin position="403"/>
        <end position="423"/>
    </location>
</feature>
<feature type="transmembrane region" description="Helical" evidence="2">
    <location>
        <begin position="451"/>
        <end position="471"/>
    </location>
</feature>
<comment type="subunit">
    <text evidence="1">May form a heterooligomeric complex that consists of seven subunits: mnhA2, mnhB2, mnhC2, mnhD2, mnhE2, mnhF2 and mnhG2.</text>
</comment>
<comment type="subcellular location">
    <subcellularLocation>
        <location evidence="3">Cell membrane</location>
        <topology evidence="3">Multi-pass membrane protein</topology>
    </subcellularLocation>
</comment>
<comment type="similarity">
    <text evidence="3">Belongs to the CPA3 antiporters (TC 2.A.63) subunit D family.</text>
</comment>
<organism>
    <name type="scientific">Staphylococcus aureus (strain COL)</name>
    <dbReference type="NCBI Taxonomy" id="93062"/>
    <lineage>
        <taxon>Bacteria</taxon>
        <taxon>Bacillati</taxon>
        <taxon>Bacillota</taxon>
        <taxon>Bacilli</taxon>
        <taxon>Bacillales</taxon>
        <taxon>Staphylococcaceae</taxon>
        <taxon>Staphylococcus</taxon>
    </lineage>
</organism>
<reference key="1">
    <citation type="journal article" date="2005" name="J. Bacteriol.">
        <title>Insights on evolution of virulence and resistance from the complete genome analysis of an early methicillin-resistant Staphylococcus aureus strain and a biofilm-producing methicillin-resistant Staphylococcus epidermidis strain.</title>
        <authorList>
            <person name="Gill S.R."/>
            <person name="Fouts D.E."/>
            <person name="Archer G.L."/>
            <person name="Mongodin E.F."/>
            <person name="DeBoy R.T."/>
            <person name="Ravel J."/>
            <person name="Paulsen I.T."/>
            <person name="Kolonay J.F."/>
            <person name="Brinkac L.M."/>
            <person name="Beanan M.J."/>
            <person name="Dodson R.J."/>
            <person name="Daugherty S.C."/>
            <person name="Madupu R."/>
            <person name="Angiuoli S.V."/>
            <person name="Durkin A.S."/>
            <person name="Haft D.H."/>
            <person name="Vamathevan J.J."/>
            <person name="Khouri H."/>
            <person name="Utterback T.R."/>
            <person name="Lee C."/>
            <person name="Dimitrov G."/>
            <person name="Jiang L."/>
            <person name="Qin H."/>
            <person name="Weidman J."/>
            <person name="Tran K."/>
            <person name="Kang K.H."/>
            <person name="Hance I.R."/>
            <person name="Nelson K.E."/>
            <person name="Fraser C.M."/>
        </authorList>
    </citation>
    <scope>NUCLEOTIDE SEQUENCE [LARGE SCALE GENOMIC DNA]</scope>
    <source>
        <strain>COL</strain>
    </source>
</reference>
<dbReference type="EMBL" id="CP000046">
    <property type="protein sequence ID" value="AAW37747.1"/>
    <property type="molecule type" value="Genomic_DNA"/>
</dbReference>
<dbReference type="RefSeq" id="WP_000950548.1">
    <property type="nucleotide sequence ID" value="NZ_JBGOFO010000005.1"/>
</dbReference>
<dbReference type="SMR" id="Q5HI42"/>
<dbReference type="KEGG" id="sac:SACOL0682"/>
<dbReference type="HOGENOM" id="CLU_007100_9_2_9"/>
<dbReference type="Proteomes" id="UP000000530">
    <property type="component" value="Chromosome"/>
</dbReference>
<dbReference type="GO" id="GO:0005886">
    <property type="term" value="C:plasma membrane"/>
    <property type="evidence" value="ECO:0007669"/>
    <property type="project" value="UniProtKB-SubCell"/>
</dbReference>
<dbReference type="GO" id="GO:0015297">
    <property type="term" value="F:antiporter activity"/>
    <property type="evidence" value="ECO:0007669"/>
    <property type="project" value="UniProtKB-KW"/>
</dbReference>
<dbReference type="GO" id="GO:0008137">
    <property type="term" value="F:NADH dehydrogenase (ubiquinone) activity"/>
    <property type="evidence" value="ECO:0007669"/>
    <property type="project" value="InterPro"/>
</dbReference>
<dbReference type="GO" id="GO:0042773">
    <property type="term" value="P:ATP synthesis coupled electron transport"/>
    <property type="evidence" value="ECO:0007669"/>
    <property type="project" value="InterPro"/>
</dbReference>
<dbReference type="InterPro" id="IPR050586">
    <property type="entry name" value="CPA3_Na-H_Antiporter_D"/>
</dbReference>
<dbReference type="InterPro" id="IPR003918">
    <property type="entry name" value="NADH_UbQ_OxRdtase"/>
</dbReference>
<dbReference type="InterPro" id="IPR001750">
    <property type="entry name" value="ND/Mrp_TM"/>
</dbReference>
<dbReference type="NCBIfam" id="NF009306">
    <property type="entry name" value="PRK12663.1"/>
    <property type="match status" value="1"/>
</dbReference>
<dbReference type="PANTHER" id="PTHR42703:SF1">
    <property type="entry name" value="NA(+)_H(+) ANTIPORTER SUBUNIT D1"/>
    <property type="match status" value="1"/>
</dbReference>
<dbReference type="PANTHER" id="PTHR42703">
    <property type="entry name" value="NADH DEHYDROGENASE"/>
    <property type="match status" value="1"/>
</dbReference>
<dbReference type="Pfam" id="PF00361">
    <property type="entry name" value="Proton_antipo_M"/>
    <property type="match status" value="1"/>
</dbReference>
<dbReference type="PRINTS" id="PR01437">
    <property type="entry name" value="NUOXDRDTASE4"/>
</dbReference>
<proteinExistence type="inferred from homology"/>
<gene>
    <name type="primary">mnhD2</name>
    <name type="synonym">mrpD2</name>
    <name type="ordered locus">SACOL0682</name>
</gene>
<sequence length="498" mass="55153">MLSNLLILPMLLPFLCALILVFLKNNDRISKYLYLGTMTITTIISLMLLIYVQRHRPITLDFGGWSAPFGIQFLGDSLSLIMVTTASFVITLIMAYGFGRGEHKANRYHLPSFILFLSVGVIGSFLTSDLFNLYVMFEIMLLASFVLITLGQSVEQLRAAIIYVVLNIIGSWLFLLGIGLLYKTVGTLNFSHIAMRLNDMGDNRTVTMISLIFLVAFSAKAALVLFMWLPKAYAVLNTELAALFAALMTKVGAYALIRFFTLLFDQHNDLIHPLLATMAAITMVIGAIGVIAYKDIKKIAAYQVIISIGFIILGLGTNTFAGINGAIFYLVNDIVVKTLLFFIIGSLVYITGYRQYQYLNGLAKKEPLFGVAFIIMIFAIGGVPPFSGFPGKVLIFQGALQNGNYIGLALMIITSLIAMYSLFRILFYMYFGDKDGEEVNFKKIPLYRKRILSILVVVVIAIGIAAPVVLNVTSDATELNTSDQLYQKLVNPHLKGED</sequence>
<name>MNHD2_STAAC</name>